<evidence type="ECO:0000255" key="1">
    <source>
        <dbReference type="HAMAP-Rule" id="MF_00740"/>
    </source>
</evidence>
<sequence>MKRAFILVLDSFGIGAAADAEQFGDVGSDTLGHIADQCEQGLANNDKREGALRLPNLSKLGLAMAHKESTGRFAPGLDADAEIIGAYGHAAELSSGKDTPSGHWEIAGVPVLFDWGYFTDKANSFPKELTDRILERAGLDGFLGNCHASGTQVLDDLGEEHMKTGKPIFYTSADSVFQIACHEETFGLDRLLELCQIAREELEDYNIGRVIARPFVGAGKGQFERTGNRRDLSVEPPSATVLQKLVEEKQGDVVSIGKIADIYANCGITKKVKATGIPALFEATLEQIKEAGDNTIVFTNFVDFDSAYGHRRDVAGYAAALEYFDGRINEVLEIMEEDDVLILTADHGCDPTWPGTDHTREHIPVIVYGKRVPAGSLGRRDSFADIGQTLATYFGTSPMDYGKNFL</sequence>
<keyword id="KW-0963">Cytoplasm</keyword>
<keyword id="KW-0413">Isomerase</keyword>
<keyword id="KW-0464">Manganese</keyword>
<keyword id="KW-0479">Metal-binding</keyword>
<accession>A7MUW4</accession>
<protein>
    <recommendedName>
        <fullName evidence="1">Phosphopentomutase</fullName>
        <ecNumber evidence="1">5.4.2.7</ecNumber>
    </recommendedName>
    <alternativeName>
        <fullName evidence="1">Phosphodeoxyribomutase</fullName>
    </alternativeName>
</protein>
<feature type="chain" id="PRO_1000046413" description="Phosphopentomutase">
    <location>
        <begin position="1"/>
        <end position="406"/>
    </location>
</feature>
<feature type="binding site" evidence="1">
    <location>
        <position position="10"/>
    </location>
    <ligand>
        <name>Mn(2+)</name>
        <dbReference type="ChEBI" id="CHEBI:29035"/>
        <label>1</label>
    </ligand>
</feature>
<feature type="binding site" evidence="1">
    <location>
        <position position="305"/>
    </location>
    <ligand>
        <name>Mn(2+)</name>
        <dbReference type="ChEBI" id="CHEBI:29035"/>
        <label>2</label>
    </ligand>
</feature>
<feature type="binding site" evidence="1">
    <location>
        <position position="310"/>
    </location>
    <ligand>
        <name>Mn(2+)</name>
        <dbReference type="ChEBI" id="CHEBI:29035"/>
        <label>2</label>
    </ligand>
</feature>
<feature type="binding site" evidence="1">
    <location>
        <position position="346"/>
    </location>
    <ligand>
        <name>Mn(2+)</name>
        <dbReference type="ChEBI" id="CHEBI:29035"/>
        <label>1</label>
    </ligand>
</feature>
<feature type="binding site" evidence="1">
    <location>
        <position position="347"/>
    </location>
    <ligand>
        <name>Mn(2+)</name>
        <dbReference type="ChEBI" id="CHEBI:29035"/>
        <label>1</label>
    </ligand>
</feature>
<feature type="binding site" evidence="1">
    <location>
        <position position="358"/>
    </location>
    <ligand>
        <name>Mn(2+)</name>
        <dbReference type="ChEBI" id="CHEBI:29035"/>
        <label>2</label>
    </ligand>
</feature>
<comment type="function">
    <text evidence="1">Isomerase that catalyzes the conversion of deoxy-ribose 1-phosphate (dRib-1-P) and ribose 1-phosphate (Rib-1-P) to deoxy-ribose 5-phosphate (dRib-5-P) and ribose 5-phosphate (Rib-5-P), respectively.</text>
</comment>
<comment type="catalytic activity">
    <reaction evidence="1">
        <text>2-deoxy-alpha-D-ribose 1-phosphate = 2-deoxy-D-ribose 5-phosphate</text>
        <dbReference type="Rhea" id="RHEA:27658"/>
        <dbReference type="ChEBI" id="CHEBI:57259"/>
        <dbReference type="ChEBI" id="CHEBI:62877"/>
        <dbReference type="EC" id="5.4.2.7"/>
    </reaction>
</comment>
<comment type="catalytic activity">
    <reaction evidence="1">
        <text>alpha-D-ribose 1-phosphate = D-ribose 5-phosphate</text>
        <dbReference type="Rhea" id="RHEA:18793"/>
        <dbReference type="ChEBI" id="CHEBI:57720"/>
        <dbReference type="ChEBI" id="CHEBI:78346"/>
        <dbReference type="EC" id="5.4.2.7"/>
    </reaction>
</comment>
<comment type="cofactor">
    <cofactor evidence="1">
        <name>Mn(2+)</name>
        <dbReference type="ChEBI" id="CHEBI:29035"/>
    </cofactor>
    <text evidence="1">Binds 2 manganese ions.</text>
</comment>
<comment type="pathway">
    <text evidence="1">Carbohydrate degradation; 2-deoxy-D-ribose 1-phosphate degradation; D-glyceraldehyde 3-phosphate and acetaldehyde from 2-deoxy-alpha-D-ribose 1-phosphate: step 1/2.</text>
</comment>
<comment type="subcellular location">
    <subcellularLocation>
        <location evidence="1">Cytoplasm</location>
    </subcellularLocation>
</comment>
<comment type="similarity">
    <text evidence="1">Belongs to the phosphopentomutase family.</text>
</comment>
<gene>
    <name evidence="1" type="primary">deoB</name>
    <name type="ordered locus">VIBHAR_03375</name>
</gene>
<proteinExistence type="inferred from homology"/>
<dbReference type="EC" id="5.4.2.7" evidence="1"/>
<dbReference type="EMBL" id="CP000789">
    <property type="protein sequence ID" value="ABU72322.1"/>
    <property type="molecule type" value="Genomic_DNA"/>
</dbReference>
<dbReference type="RefSeq" id="WP_012128804.1">
    <property type="nucleotide sequence ID" value="NC_009783.1"/>
</dbReference>
<dbReference type="SMR" id="A7MUW4"/>
<dbReference type="KEGG" id="vha:VIBHAR_03375"/>
<dbReference type="PATRIC" id="fig|338187.25.peg.2822"/>
<dbReference type="UniPathway" id="UPA00002">
    <property type="reaction ID" value="UER00467"/>
</dbReference>
<dbReference type="Proteomes" id="UP000008152">
    <property type="component" value="Chromosome I"/>
</dbReference>
<dbReference type="GO" id="GO:0005829">
    <property type="term" value="C:cytosol"/>
    <property type="evidence" value="ECO:0007669"/>
    <property type="project" value="TreeGrafter"/>
</dbReference>
<dbReference type="GO" id="GO:0000287">
    <property type="term" value="F:magnesium ion binding"/>
    <property type="evidence" value="ECO:0007669"/>
    <property type="project" value="InterPro"/>
</dbReference>
<dbReference type="GO" id="GO:0030145">
    <property type="term" value="F:manganese ion binding"/>
    <property type="evidence" value="ECO:0007669"/>
    <property type="project" value="UniProtKB-UniRule"/>
</dbReference>
<dbReference type="GO" id="GO:0008973">
    <property type="term" value="F:phosphopentomutase activity"/>
    <property type="evidence" value="ECO:0007669"/>
    <property type="project" value="UniProtKB-UniRule"/>
</dbReference>
<dbReference type="GO" id="GO:0006018">
    <property type="term" value="P:2-deoxyribose 1-phosphate catabolic process"/>
    <property type="evidence" value="ECO:0007669"/>
    <property type="project" value="UniProtKB-UniRule"/>
</dbReference>
<dbReference type="GO" id="GO:0006015">
    <property type="term" value="P:5-phosphoribose 1-diphosphate biosynthetic process"/>
    <property type="evidence" value="ECO:0007669"/>
    <property type="project" value="UniProtKB-UniPathway"/>
</dbReference>
<dbReference type="GO" id="GO:0043094">
    <property type="term" value="P:metabolic compound salvage"/>
    <property type="evidence" value="ECO:0007669"/>
    <property type="project" value="InterPro"/>
</dbReference>
<dbReference type="GO" id="GO:0009117">
    <property type="term" value="P:nucleotide metabolic process"/>
    <property type="evidence" value="ECO:0007669"/>
    <property type="project" value="InterPro"/>
</dbReference>
<dbReference type="CDD" id="cd16009">
    <property type="entry name" value="PPM"/>
    <property type="match status" value="1"/>
</dbReference>
<dbReference type="FunFam" id="3.30.70.1250:FF:000001">
    <property type="entry name" value="Phosphopentomutase"/>
    <property type="match status" value="1"/>
</dbReference>
<dbReference type="Gene3D" id="3.40.720.10">
    <property type="entry name" value="Alkaline Phosphatase, subunit A"/>
    <property type="match status" value="1"/>
</dbReference>
<dbReference type="Gene3D" id="3.30.70.1250">
    <property type="entry name" value="Phosphopentomutase"/>
    <property type="match status" value="1"/>
</dbReference>
<dbReference type="HAMAP" id="MF_00740">
    <property type="entry name" value="Phosphopentomut"/>
    <property type="match status" value="1"/>
</dbReference>
<dbReference type="InterPro" id="IPR017850">
    <property type="entry name" value="Alkaline_phosphatase_core_sf"/>
</dbReference>
<dbReference type="InterPro" id="IPR010045">
    <property type="entry name" value="DeoB"/>
</dbReference>
<dbReference type="InterPro" id="IPR006124">
    <property type="entry name" value="Metalloenzyme"/>
</dbReference>
<dbReference type="InterPro" id="IPR024052">
    <property type="entry name" value="Phosphopentomutase_DeoB_cap_sf"/>
</dbReference>
<dbReference type="NCBIfam" id="TIGR01696">
    <property type="entry name" value="deoB"/>
    <property type="match status" value="1"/>
</dbReference>
<dbReference type="NCBIfam" id="NF003766">
    <property type="entry name" value="PRK05362.1"/>
    <property type="match status" value="1"/>
</dbReference>
<dbReference type="PANTHER" id="PTHR21110">
    <property type="entry name" value="PHOSPHOPENTOMUTASE"/>
    <property type="match status" value="1"/>
</dbReference>
<dbReference type="PANTHER" id="PTHR21110:SF0">
    <property type="entry name" value="PHOSPHOPENTOMUTASE"/>
    <property type="match status" value="1"/>
</dbReference>
<dbReference type="Pfam" id="PF01676">
    <property type="entry name" value="Metalloenzyme"/>
    <property type="match status" value="1"/>
</dbReference>
<dbReference type="PIRSF" id="PIRSF001491">
    <property type="entry name" value="Ppentomutase"/>
    <property type="match status" value="1"/>
</dbReference>
<dbReference type="SUPFAM" id="SSF53649">
    <property type="entry name" value="Alkaline phosphatase-like"/>
    <property type="match status" value="1"/>
</dbReference>
<dbReference type="SUPFAM" id="SSF143856">
    <property type="entry name" value="DeoB insert domain-like"/>
    <property type="match status" value="1"/>
</dbReference>
<reference key="1">
    <citation type="submission" date="2007-08" db="EMBL/GenBank/DDBJ databases">
        <authorList>
            <consortium name="The Vibrio harveyi Genome Sequencing Project"/>
            <person name="Bassler B."/>
            <person name="Clifton S.W."/>
            <person name="Fulton L."/>
            <person name="Delehaunty K."/>
            <person name="Fronick C."/>
            <person name="Harrison M."/>
            <person name="Markivic C."/>
            <person name="Fulton R."/>
            <person name="Tin-Wollam A.-M."/>
            <person name="Shah N."/>
            <person name="Pepin K."/>
            <person name="Nash W."/>
            <person name="Thiruvilangam P."/>
            <person name="Bhonagiri V."/>
            <person name="Waters C."/>
            <person name="Tu K.C."/>
            <person name="Irgon J."/>
            <person name="Wilson R.K."/>
        </authorList>
    </citation>
    <scope>NUCLEOTIDE SEQUENCE [LARGE SCALE GENOMIC DNA]</scope>
    <source>
        <strain>ATCC BAA-1116 / BB120</strain>
    </source>
</reference>
<organism>
    <name type="scientific">Vibrio campbellii (strain ATCC BAA-1116)</name>
    <dbReference type="NCBI Taxonomy" id="2902295"/>
    <lineage>
        <taxon>Bacteria</taxon>
        <taxon>Pseudomonadati</taxon>
        <taxon>Pseudomonadota</taxon>
        <taxon>Gammaproteobacteria</taxon>
        <taxon>Vibrionales</taxon>
        <taxon>Vibrionaceae</taxon>
        <taxon>Vibrio</taxon>
    </lineage>
</organism>
<name>DEOB_VIBC1</name>